<feature type="chain" id="PRO_0000235215" description="Protein Thf1">
    <location>
        <begin position="1"/>
        <end position="243"/>
    </location>
</feature>
<feature type="region of interest" description="Disordered" evidence="2">
    <location>
        <begin position="210"/>
        <end position="243"/>
    </location>
</feature>
<feature type="coiled-coil region" evidence="1">
    <location>
        <begin position="180"/>
        <end position="224"/>
    </location>
</feature>
<feature type="compositionally biased region" description="Basic and acidic residues" evidence="2">
    <location>
        <begin position="210"/>
        <end position="220"/>
    </location>
</feature>
<feature type="compositionally biased region" description="Polar residues" evidence="2">
    <location>
        <begin position="221"/>
        <end position="243"/>
    </location>
</feature>
<accession>Q7V7R3</accession>
<protein>
    <recommendedName>
        <fullName evidence="1">Protein Thf1</fullName>
    </recommendedName>
</protein>
<reference key="1">
    <citation type="journal article" date="2003" name="Nature">
        <title>Genome divergence in two Prochlorococcus ecotypes reflects oceanic niche differentiation.</title>
        <authorList>
            <person name="Rocap G."/>
            <person name="Larimer F.W."/>
            <person name="Lamerdin J.E."/>
            <person name="Malfatti S."/>
            <person name="Chain P."/>
            <person name="Ahlgren N.A."/>
            <person name="Arellano A."/>
            <person name="Coleman M."/>
            <person name="Hauser L."/>
            <person name="Hess W.R."/>
            <person name="Johnson Z.I."/>
            <person name="Land M.L."/>
            <person name="Lindell D."/>
            <person name="Post A.F."/>
            <person name="Regala W."/>
            <person name="Shah M."/>
            <person name="Shaw S.L."/>
            <person name="Steglich C."/>
            <person name="Sullivan M.B."/>
            <person name="Ting C.S."/>
            <person name="Tolonen A."/>
            <person name="Webb E.A."/>
            <person name="Zinser E.R."/>
            <person name="Chisholm S.W."/>
        </authorList>
    </citation>
    <scope>NUCLEOTIDE SEQUENCE [LARGE SCALE GENOMIC DNA]</scope>
    <source>
        <strain>MIT 9313</strain>
    </source>
</reference>
<dbReference type="EMBL" id="BX548175">
    <property type="protein sequence ID" value="CAE20850.1"/>
    <property type="molecule type" value="Genomic_DNA"/>
</dbReference>
<dbReference type="RefSeq" id="WP_011130053.1">
    <property type="nucleotide sequence ID" value="NC_005071.1"/>
</dbReference>
<dbReference type="SMR" id="Q7V7R3"/>
<dbReference type="KEGG" id="pmt:PMT_0675"/>
<dbReference type="eggNOG" id="ENOG5033PEZ">
    <property type="taxonomic scope" value="Bacteria"/>
</dbReference>
<dbReference type="HOGENOM" id="CLU_079763_1_0_3"/>
<dbReference type="OrthoDB" id="463078at2"/>
<dbReference type="Proteomes" id="UP000001423">
    <property type="component" value="Chromosome"/>
</dbReference>
<dbReference type="GO" id="GO:0030096">
    <property type="term" value="C:plasma membrane-derived thylakoid photosystem II"/>
    <property type="evidence" value="ECO:0007669"/>
    <property type="project" value="TreeGrafter"/>
</dbReference>
<dbReference type="GO" id="GO:0010207">
    <property type="term" value="P:photosystem II assembly"/>
    <property type="evidence" value="ECO:0007669"/>
    <property type="project" value="InterPro"/>
</dbReference>
<dbReference type="HAMAP" id="MF_01843">
    <property type="entry name" value="Thf1"/>
    <property type="match status" value="1"/>
</dbReference>
<dbReference type="InterPro" id="IPR017499">
    <property type="entry name" value="Thf1"/>
</dbReference>
<dbReference type="NCBIfam" id="TIGR03060">
    <property type="entry name" value="PS_II_psb29"/>
    <property type="match status" value="1"/>
</dbReference>
<dbReference type="PANTHER" id="PTHR34793">
    <property type="entry name" value="PROTEIN THYLAKOID FORMATION 1, CHLOROPLASTIC"/>
    <property type="match status" value="1"/>
</dbReference>
<dbReference type="PANTHER" id="PTHR34793:SF1">
    <property type="entry name" value="PROTEIN THYLAKOID FORMATION 1, CHLOROPLASTIC"/>
    <property type="match status" value="1"/>
</dbReference>
<dbReference type="Pfam" id="PF11264">
    <property type="entry name" value="ThylakoidFormat"/>
    <property type="match status" value="1"/>
</dbReference>
<gene>
    <name evidence="1" type="primary">thf1</name>
    <name type="ordered locus">PMT_0675</name>
</gene>
<name>THF1_PROMM</name>
<evidence type="ECO:0000255" key="1">
    <source>
        <dbReference type="HAMAP-Rule" id="MF_01843"/>
    </source>
</evidence>
<evidence type="ECO:0000256" key="2">
    <source>
        <dbReference type="SAM" id="MobiDB-lite"/>
    </source>
</evidence>
<keyword id="KW-0175">Coiled coil</keyword>
<keyword id="KW-1185">Reference proteome</keyword>
<organism>
    <name type="scientific">Prochlorococcus marinus (strain MIT 9313)</name>
    <dbReference type="NCBI Taxonomy" id="74547"/>
    <lineage>
        <taxon>Bacteria</taxon>
        <taxon>Bacillati</taxon>
        <taxon>Cyanobacteriota</taxon>
        <taxon>Cyanophyceae</taxon>
        <taxon>Synechococcales</taxon>
        <taxon>Prochlorococcaceae</taxon>
        <taxon>Prochlorococcus</taxon>
    </lineage>
</organism>
<proteinExistence type="inferred from homology"/>
<comment type="function">
    <text evidence="1">May be involved in photosynthetic membrane biogenesis.</text>
</comment>
<comment type="similarity">
    <text evidence="1">Belongs to the THF1 family.</text>
</comment>
<sequence length="243" mass="27082">MSDRKTIADSKRAFNHDFPHVIPSLYRRTTDELLVELHLLSHQKHFHPDALFAIGLSQVFDVFTSGYRPEAHVKTLFDALCRSCGFDPNALRKQAQQTLESVRGHDLEEVQGWIQQQGKGAPEALAKALRNTAGSTTFHYSRLMAVGLLSLLASAQGDESSDPEKLSQIAHELSESVGFSKARVEKDLNLYKSNLEKMAQAVELTEQILESERRKREQNESAKLNTGSSEQMSQGVEACSNIS</sequence>